<gene>
    <name evidence="11" type="primary">CAS5</name>
    <name type="ordered locus">CAALFM_C401190WA</name>
    <name type="ORF">CaO19.12140</name>
    <name type="ORF">CaO19.4670</name>
</gene>
<proteinExistence type="evidence at protein level"/>
<keyword id="KW-0130">Cell adhesion</keyword>
<keyword id="KW-0963">Cytoplasm</keyword>
<keyword id="KW-0479">Metal-binding</keyword>
<keyword id="KW-0539">Nucleus</keyword>
<keyword id="KW-0597">Phosphoprotein</keyword>
<keyword id="KW-1185">Reference proteome</keyword>
<keyword id="KW-0677">Repeat</keyword>
<keyword id="KW-0804">Transcription</keyword>
<keyword id="KW-0805">Transcription regulation</keyword>
<keyword id="KW-0843">Virulence</keyword>
<keyword id="KW-0862">Zinc</keyword>
<keyword id="KW-0863">Zinc-finger</keyword>
<protein>
    <recommendedName>
        <fullName evidence="11">Cell wall integrity transcriptional regulator CAS5</fullName>
    </recommendedName>
    <alternativeName>
        <fullName evidence="11">Caspofungin sensitivity protein 5</fullName>
    </alternativeName>
</protein>
<dbReference type="EMBL" id="CP017626">
    <property type="protein sequence ID" value="AOW28904.1"/>
    <property type="molecule type" value="Genomic_DNA"/>
</dbReference>
<dbReference type="RefSeq" id="XP_722740.1">
    <property type="nucleotide sequence ID" value="XM_717647.2"/>
</dbReference>
<dbReference type="SMR" id="Q5AMH6"/>
<dbReference type="BioGRID" id="1218537">
    <property type="interactions" value="2"/>
</dbReference>
<dbReference type="STRING" id="237561.Q5AMH6"/>
<dbReference type="iPTMnet" id="Q5AMH6"/>
<dbReference type="EnsemblFungi" id="C4_01190W_A-T">
    <property type="protein sequence ID" value="C4_01190W_A-T-p1"/>
    <property type="gene ID" value="C4_01190W_A"/>
</dbReference>
<dbReference type="GeneID" id="3635652"/>
<dbReference type="KEGG" id="cal:CAALFM_C401190WA"/>
<dbReference type="CGD" id="CAL0000197117">
    <property type="gene designation" value="CAS5"/>
</dbReference>
<dbReference type="VEuPathDB" id="FungiDB:C4_01190W_A"/>
<dbReference type="eggNOG" id="KOG1721">
    <property type="taxonomic scope" value="Eukaryota"/>
</dbReference>
<dbReference type="HOGENOM" id="CLU_385415_0_0_1"/>
<dbReference type="InParanoid" id="Q5AMH6"/>
<dbReference type="OMA" id="THRNYNE"/>
<dbReference type="OrthoDB" id="654211at2759"/>
<dbReference type="PHI-base" id="PHI:3503"/>
<dbReference type="PRO" id="PR:Q5AMH6"/>
<dbReference type="Proteomes" id="UP000000559">
    <property type="component" value="Chromosome 4"/>
</dbReference>
<dbReference type="GO" id="GO:0005737">
    <property type="term" value="C:cytoplasm"/>
    <property type="evidence" value="ECO:0007669"/>
    <property type="project" value="UniProtKB-SubCell"/>
</dbReference>
<dbReference type="GO" id="GO:0005634">
    <property type="term" value="C:nucleus"/>
    <property type="evidence" value="ECO:0007669"/>
    <property type="project" value="UniProtKB-SubCell"/>
</dbReference>
<dbReference type="GO" id="GO:0008270">
    <property type="term" value="F:zinc ion binding"/>
    <property type="evidence" value="ECO:0007669"/>
    <property type="project" value="UniProtKB-KW"/>
</dbReference>
<dbReference type="GO" id="GO:0007155">
    <property type="term" value="P:cell adhesion"/>
    <property type="evidence" value="ECO:0007669"/>
    <property type="project" value="UniProtKB-KW"/>
</dbReference>
<dbReference type="GO" id="GO:0042546">
    <property type="term" value="P:cell wall biogenesis"/>
    <property type="evidence" value="ECO:0000315"/>
    <property type="project" value="CGD"/>
</dbReference>
<dbReference type="GO" id="GO:0070417">
    <property type="term" value="P:cellular response to cold"/>
    <property type="evidence" value="ECO:0000315"/>
    <property type="project" value="CGD"/>
</dbReference>
<dbReference type="GO" id="GO:0044114">
    <property type="term" value="P:development of symbiont in host"/>
    <property type="evidence" value="ECO:0000315"/>
    <property type="project" value="CGD"/>
</dbReference>
<dbReference type="GO" id="GO:0030447">
    <property type="term" value="P:filamentous growth"/>
    <property type="evidence" value="ECO:0000315"/>
    <property type="project" value="CGD"/>
</dbReference>
<dbReference type="GO" id="GO:0031505">
    <property type="term" value="P:fungal-type cell wall organization"/>
    <property type="evidence" value="ECO:0000315"/>
    <property type="project" value="CGD"/>
</dbReference>
<dbReference type="GO" id="GO:0030448">
    <property type="term" value="P:hyphal growth"/>
    <property type="evidence" value="ECO:0000315"/>
    <property type="project" value="CGD"/>
</dbReference>
<dbReference type="GO" id="GO:1900189">
    <property type="term" value="P:positive regulation of cell adhesion involved in single-species biofilm formation"/>
    <property type="evidence" value="ECO:0000315"/>
    <property type="project" value="CGD"/>
</dbReference>
<dbReference type="GO" id="GO:0010811">
    <property type="term" value="P:positive regulation of cell-substrate adhesion"/>
    <property type="evidence" value="ECO:0000315"/>
    <property type="project" value="CGD"/>
</dbReference>
<dbReference type="GO" id="GO:0032443">
    <property type="term" value="P:regulation of ergosterol biosynthetic process"/>
    <property type="evidence" value="ECO:0000315"/>
    <property type="project" value="CGD"/>
</dbReference>
<dbReference type="GO" id="GO:0006357">
    <property type="term" value="P:regulation of transcription by RNA polymerase II"/>
    <property type="evidence" value="ECO:0000315"/>
    <property type="project" value="CGD"/>
</dbReference>
<dbReference type="GO" id="GO:0044011">
    <property type="term" value="P:single-species biofilm formation on inanimate substrate"/>
    <property type="evidence" value="ECO:0000315"/>
    <property type="project" value="CGD"/>
</dbReference>
<dbReference type="FunFam" id="3.30.160.60:FF:004308">
    <property type="match status" value="1"/>
</dbReference>
<dbReference type="Gene3D" id="3.30.160.60">
    <property type="entry name" value="Classic Zinc Finger"/>
    <property type="match status" value="2"/>
</dbReference>
<dbReference type="InterPro" id="IPR051007">
    <property type="entry name" value="creA/MIG_C2H2-ZnF"/>
</dbReference>
<dbReference type="InterPro" id="IPR036236">
    <property type="entry name" value="Znf_C2H2_sf"/>
</dbReference>
<dbReference type="InterPro" id="IPR013087">
    <property type="entry name" value="Znf_C2H2_type"/>
</dbReference>
<dbReference type="PANTHER" id="PTHR47428">
    <property type="entry name" value="REGULATORY PROTEIN MIG1-RELATED"/>
    <property type="match status" value="1"/>
</dbReference>
<dbReference type="PANTHER" id="PTHR47428:SF1">
    <property type="entry name" value="REGULATORY PROTEIN MIG1-RELATED"/>
    <property type="match status" value="1"/>
</dbReference>
<dbReference type="Pfam" id="PF00096">
    <property type="entry name" value="zf-C2H2"/>
    <property type="match status" value="1"/>
</dbReference>
<dbReference type="SMART" id="SM00355">
    <property type="entry name" value="ZnF_C2H2"/>
    <property type="match status" value="2"/>
</dbReference>
<dbReference type="SUPFAM" id="SSF57667">
    <property type="entry name" value="beta-beta-alpha zinc fingers"/>
    <property type="match status" value="1"/>
</dbReference>
<dbReference type="PROSITE" id="PS00028">
    <property type="entry name" value="ZINC_FINGER_C2H2_1"/>
    <property type="match status" value="2"/>
</dbReference>
<dbReference type="PROSITE" id="PS50157">
    <property type="entry name" value="ZINC_FINGER_C2H2_2"/>
    <property type="match status" value="2"/>
</dbReference>
<sequence>MENYLLSSPTQLSQPYDDGTNSLLFMDNYELSQNLSQPLDQHLQSLQQQSQVQSQAPQQVQSLNQHQQLPQIQPFPTLVNNQQYAQETFQQLSQQHQQQQQQQQQFSPFQQSQLQQQFQYQYSQQQQQQHFQQPVTIEEEIVPASNNTNIQISKFFDDNKGDDEDIANSGNFNEFDHSRNISLDDTTITDLHRRENSINPPTGLPHSISSNTIYSYSSFESPQSHIQSQPSYSQGYHNQNSLSTPLRRNKSYSISSANFNQSPVNLATTAMNKIMKTPLRGHTRSRSKVDVNAAVTAAMNLGQATKSNSTSSYNSTLNPFYTPSQQLSSTDDDDISTPLLTPGTKLHTSKSTFFSPYNKDDLEDQDDDAVKQLRKAKSYTSLLRKKKREDMTPSKQNQQHQQQQQQQQQQQQSRQSGGGHIQNLSFPNSTSQPKIDLLAYDQNPMTSYPPMDKSILKNLNQSISPFNKPKLSPPPSNFPSISIDLTTIATNKSSSFSSSTTHRNYNENTPFNSANSTSGGLLPPMATFTVPTVIKEELQVHNLQEEEQEHQDEQMEIDSFESNEKNARPTLSTSSLVRSMKMANLEISNDQQMSSNEDENIVTEAVVKQEKNGPVVDDVNGTGTNSKKPRKKQKSKSKENCNKKGKVATGNGKDNDKNNECLVNKGNKTNNNDTSNDKLDNDNKNTNGNGNNDNDNDSEENNDNVDDADDDDDGTVTIPIPEDLNVTKVKVRNNRSKSNDKSDPKKKHKCPICESRFQRPEHVKRHLKSHSSEKPFECQMPNCGKRFNRKDNLKAHLKKIHGLVKGQEEFTRVLNENKEVS</sequence>
<accession>Q5AMH6</accession>
<accession>A0A1D8PL77</accession>
<reference key="1">
    <citation type="journal article" date="2004" name="Proc. Natl. Acad. Sci. U.S.A.">
        <title>The diploid genome sequence of Candida albicans.</title>
        <authorList>
            <person name="Jones T."/>
            <person name="Federspiel N.A."/>
            <person name="Chibana H."/>
            <person name="Dungan J."/>
            <person name="Kalman S."/>
            <person name="Magee B.B."/>
            <person name="Newport G."/>
            <person name="Thorstenson Y.R."/>
            <person name="Agabian N."/>
            <person name="Magee P.T."/>
            <person name="Davis R.W."/>
            <person name="Scherer S."/>
        </authorList>
    </citation>
    <scope>NUCLEOTIDE SEQUENCE [LARGE SCALE GENOMIC DNA]</scope>
    <source>
        <strain>SC5314 / ATCC MYA-2876</strain>
    </source>
</reference>
<reference key="2">
    <citation type="journal article" date="2007" name="Genome Biol.">
        <title>Assembly of the Candida albicans genome into sixteen supercontigs aligned on the eight chromosomes.</title>
        <authorList>
            <person name="van het Hoog M."/>
            <person name="Rast T.J."/>
            <person name="Martchenko M."/>
            <person name="Grindle S."/>
            <person name="Dignard D."/>
            <person name="Hogues H."/>
            <person name="Cuomo C."/>
            <person name="Berriman M."/>
            <person name="Scherer S."/>
            <person name="Magee B.B."/>
            <person name="Whiteway M."/>
            <person name="Chibana H."/>
            <person name="Nantel A."/>
            <person name="Magee P.T."/>
        </authorList>
    </citation>
    <scope>GENOME REANNOTATION</scope>
    <source>
        <strain>SC5314 / ATCC MYA-2876</strain>
    </source>
</reference>
<reference key="3">
    <citation type="journal article" date="2013" name="Genome Biol.">
        <title>Assembly of a phased diploid Candida albicans genome facilitates allele-specific measurements and provides a simple model for repeat and indel structure.</title>
        <authorList>
            <person name="Muzzey D."/>
            <person name="Schwartz K."/>
            <person name="Weissman J.S."/>
            <person name="Sherlock G."/>
        </authorList>
    </citation>
    <scope>NUCLEOTIDE SEQUENCE [LARGE SCALE GENOMIC DNA]</scope>
    <scope>GENOME REANNOTATION</scope>
    <source>
        <strain>SC5314 / ATCC MYA-2876</strain>
    </source>
</reference>
<reference key="4">
    <citation type="journal article" date="2006" name="PLoS Pathog.">
        <title>Control of the C. albicans cell wall damage response by transcriptional regulator Cas5.</title>
        <authorList>
            <person name="Bruno V.M."/>
            <person name="Kalachikov S."/>
            <person name="Subaran R."/>
            <person name="Nobile C.J."/>
            <person name="Kyratsous C."/>
            <person name="Mitchell A.P."/>
        </authorList>
    </citation>
    <scope>FUNCTION</scope>
    <scope>DISRUPTION PHENOTYPE</scope>
</reference>
<reference key="5">
    <citation type="journal article" date="2009" name="Eukaryot. Cell">
        <title>Candida albicans hyphal formation and virulence assessed using a Caenorhabditis elegans infection model.</title>
        <authorList>
            <person name="Pukkila-Worley R."/>
            <person name="Peleg A.Y."/>
            <person name="Tampakakis E."/>
            <person name="Mylonakis E."/>
        </authorList>
    </citation>
    <scope>FUNCTION</scope>
    <scope>DISRUPTION PHENOTYPE</scope>
</reference>
<reference key="6">
    <citation type="journal article" date="2009" name="J. Infect. Dis.">
        <title>Candida albicans Cas5, a regulator of cell wall integrity, is required for virulence in murine and toll mutant fly models.</title>
        <authorList>
            <person name="Chamilos G."/>
            <person name="Nobile C.J."/>
            <person name="Bruno V.M."/>
            <person name="Lewis R.E."/>
            <person name="Mitchell A.P."/>
            <person name="Kontoyiannis D.P."/>
        </authorList>
    </citation>
    <scope>FUNCTION</scope>
    <scope>DISRUPTION PHENOTYPE</scope>
</reference>
<reference key="7">
    <citation type="journal article" date="2012" name="PLoS Pathog.">
        <title>Portrait of Candida albicans adherence regulators.</title>
        <authorList>
            <person name="Finkel J.S."/>
            <person name="Xu W."/>
            <person name="Huang D."/>
            <person name="Hill E.M."/>
            <person name="Desai J.V."/>
            <person name="Woolford C.A."/>
            <person name="Nett J.E."/>
            <person name="Taff H."/>
            <person name="Norice C.T."/>
            <person name="Andes D.R."/>
            <person name="Lanni F."/>
            <person name="Mitchell A.P."/>
        </authorList>
    </citation>
    <scope>FUNCTION</scope>
    <scope>DISRUPTION PHENOTYPE</scope>
</reference>
<reference key="8">
    <citation type="journal article" date="2014" name="Antimicrob. Agents Chemother.">
        <title>Disruption of the transcriptional regulator Cas5 results in enhanced killing of Candida albicans by Fluconazole.</title>
        <authorList>
            <person name="Vasicek E.M."/>
            <person name="Berkow E.L."/>
            <person name="Bruno V.M."/>
            <person name="Mitchell A.P."/>
            <person name="Wiederhold N.P."/>
            <person name="Barker K.S."/>
            <person name="Rogers P.D."/>
        </authorList>
    </citation>
    <scope>FUNCTION</scope>
    <scope>DISRUPTION PHENOTYPE</scope>
</reference>
<reference key="9">
    <citation type="journal article" date="2017" name="Nat. Commun.">
        <title>The Candida albicans transcription factor Cas5 couples stress responses, drug resistance and cell cycle regulation.</title>
        <authorList>
            <person name="Xie J.L."/>
            <person name="Qin L."/>
            <person name="Miao Z."/>
            <person name="Grys B.T."/>
            <person name="Diaz J.C."/>
            <person name="Ting K."/>
            <person name="Krieger J.R."/>
            <person name="Tong J."/>
            <person name="Tan K."/>
            <person name="Leach M.D."/>
            <person name="Ketela T."/>
            <person name="Moran M.F."/>
            <person name="Krysan D.J."/>
            <person name="Boone C."/>
            <person name="Andrews B.J."/>
            <person name="Selmecki A."/>
            <person name="Ho Wong K."/>
            <person name="Robbins N."/>
            <person name="Cowen L.E."/>
        </authorList>
    </citation>
    <scope>FUNCTION</scope>
    <scope>DISRUPTION PHENOTYPE</scope>
    <scope>SUBCELLULAR LOCATION</scope>
    <scope>PHOSPHORYLATION AT SER-769</scope>
    <scope>DEPHOSPHORYLATION BY GLC7</scope>
    <scope>MUTAGENESIS OF SER-769</scope>
</reference>
<reference key="10">
    <citation type="journal article" date="2021" name="Antimicrob. Agents Chemother.">
        <title>Efg1 and Cas5 Orchestrate Cell Wall Damage Response to Caspofungin in Candida albicans.</title>
        <authorList>
            <person name="Xiong K."/>
            <person name="Su C."/>
            <person name="Sun Q."/>
            <person name="Lu Y."/>
        </authorList>
    </citation>
    <scope>FUNCTION</scope>
    <scope>DISRUPTION PHENOTYPE</scope>
</reference>
<reference key="11">
    <citation type="journal article" date="2021" name="J. Microbiol.">
        <title>The transcription factor Cas5 suppresses hyphal morphogenesis during yeast-form growth in Candida albicans.</title>
        <authorList>
            <person name="Kim J.M."/>
            <person name="Moon H.Y."/>
            <person name="Lee D.W."/>
            <person name="Kang H.A."/>
            <person name="Kim J.Y."/>
        </authorList>
    </citation>
    <scope>FUNCTION</scope>
    <scope>DISRUPTION PHENOTYPE</scope>
</reference>
<evidence type="ECO:0000255" key="1">
    <source>
        <dbReference type="PROSITE-ProRule" id="PRU00042"/>
    </source>
</evidence>
<evidence type="ECO:0000256" key="2">
    <source>
        <dbReference type="SAM" id="MobiDB-lite"/>
    </source>
</evidence>
<evidence type="ECO:0000269" key="3">
    <source>
    </source>
</evidence>
<evidence type="ECO:0000269" key="4">
    <source>
    </source>
</evidence>
<evidence type="ECO:0000269" key="5">
    <source>
    </source>
</evidence>
<evidence type="ECO:0000269" key="6">
    <source>
    </source>
</evidence>
<evidence type="ECO:0000269" key="7">
    <source>
    </source>
</evidence>
<evidence type="ECO:0000269" key="8">
    <source>
    </source>
</evidence>
<evidence type="ECO:0000269" key="9">
    <source>
    </source>
</evidence>
<evidence type="ECO:0000269" key="10">
    <source>
    </source>
</evidence>
<evidence type="ECO:0000303" key="11">
    <source>
    </source>
</evidence>
<comment type="function">
    <text evidence="3 4 5 6 7 8 9 10">Transcription factor that acts with ADA2 to promote cell wall integrity (PubMed:16552442, PubMed:28894103, PubMed:33168610). Regulates the expression of target genes in concert with the transcriptional regulators SWI4 and SWI6 (PubMed:28894103). Crucial for proper cell cycle dynamics and responses to echinocandins, which inhibit beta-1,3-glucan synthesis (PubMed:28894103). Has distinct transcriptional targets under basal and stress conditions (PubMed:28894103). Also regulates a transcriptional network that influences the response to fluconazole (PubMed:25182640). Plays a key role in adherence, hyphal development, and virulence (PubMed:19463063, PubMed:19666778, PubMed:22359502). Acts as a repressor of hypha-specific genes during yeast-form growth (PubMed:34491522).</text>
</comment>
<comment type="subcellular location">
    <subcellularLocation>
        <location evidence="8">Nucleus</location>
    </subcellularLocation>
    <subcellularLocation>
        <location evidence="8">Cytoplasm</location>
    </subcellularLocation>
    <text evidence="8">Localizes to the cytoplasm under basal conditions and translocates to the nucleus under cell wall stress.</text>
</comment>
<comment type="PTM">
    <text evidence="8">Phosphorylation at Ser-769 and probably additional serine residues (PubMed:28894103). GLC7 dephosphorylates CAS5 in response to cell wall stress which leads to its translocation to the nucleus (PubMed:28894103).</text>
</comment>
<comment type="disruption phenotype">
    <text evidence="3 4 5 6 7 8 9 10">Leads to sensitivity to caspofungin and affects expression of many genes including caspofungin-responsive genes (PubMed:16552442, PubMed:28894103, PubMed:33168610). Results in hyphal defect during C.elegans infection and exhibits attenuated virulence in flies and mice models for candidiasis (PubMed:19463063, PubMed:19666778, PubMed:22359502). Decreases the expression levels of a set of ergosterol biosynthesis genes, such as ERG2, ERG3, ERG5, ERG6, ERG11, and ERG24, resulting in the accumulation of lanosterol and zymosterol (PubMed:34491522). Impairs maintenance of the yeast form under non-hypha-inducing conditions (PubMed:34491522). Leads to increases susceptibility to fluconazole (PubMed:25182640).</text>
</comment>
<feature type="chain" id="PRO_0000426062" description="Cell wall integrity transcriptional regulator CAS5">
    <location>
        <begin position="1"/>
        <end position="821"/>
    </location>
</feature>
<feature type="zinc finger region" description="C2H2-type 1" evidence="1">
    <location>
        <begin position="748"/>
        <end position="770"/>
    </location>
</feature>
<feature type="zinc finger region" description="C2H2-type 2" evidence="1">
    <location>
        <begin position="776"/>
        <end position="801"/>
    </location>
</feature>
<feature type="region of interest" description="Disordered" evidence="2">
    <location>
        <begin position="42"/>
        <end position="66"/>
    </location>
</feature>
<feature type="region of interest" description="Disordered" evidence="2">
    <location>
        <begin position="219"/>
        <end position="245"/>
    </location>
</feature>
<feature type="region of interest" description="Disordered" evidence="2">
    <location>
        <begin position="305"/>
        <end position="432"/>
    </location>
</feature>
<feature type="region of interest" description="Disordered" evidence="2">
    <location>
        <begin position="544"/>
        <end position="576"/>
    </location>
</feature>
<feature type="region of interest" description="Disordered" evidence="2">
    <location>
        <begin position="607"/>
        <end position="750"/>
    </location>
</feature>
<feature type="compositionally biased region" description="Polar residues" evidence="2">
    <location>
        <begin position="222"/>
        <end position="245"/>
    </location>
</feature>
<feature type="compositionally biased region" description="Low complexity" evidence="2">
    <location>
        <begin position="305"/>
        <end position="318"/>
    </location>
</feature>
<feature type="compositionally biased region" description="Polar residues" evidence="2">
    <location>
        <begin position="319"/>
        <end position="329"/>
    </location>
</feature>
<feature type="compositionally biased region" description="Basic residues" evidence="2">
    <location>
        <begin position="372"/>
        <end position="387"/>
    </location>
</feature>
<feature type="compositionally biased region" description="Low complexity" evidence="2">
    <location>
        <begin position="396"/>
        <end position="412"/>
    </location>
</feature>
<feature type="compositionally biased region" description="Polar residues" evidence="2">
    <location>
        <begin position="422"/>
        <end position="432"/>
    </location>
</feature>
<feature type="compositionally biased region" description="Acidic residues" evidence="2">
    <location>
        <begin position="545"/>
        <end position="561"/>
    </location>
</feature>
<feature type="compositionally biased region" description="Low complexity" evidence="2">
    <location>
        <begin position="662"/>
        <end position="674"/>
    </location>
</feature>
<feature type="compositionally biased region" description="Low complexity" evidence="2">
    <location>
        <begin position="684"/>
        <end position="693"/>
    </location>
</feature>
<feature type="compositionally biased region" description="Acidic residues" evidence="2">
    <location>
        <begin position="694"/>
        <end position="714"/>
    </location>
</feature>
<feature type="modified residue" description="Phosphoserine" evidence="8">
    <location>
        <position position="769"/>
    </location>
</feature>
<feature type="mutagenesis site" description="Leads to hypersensitivity to caspofungin." evidence="8">
    <original>S</original>
    <variation>E</variation>
    <location>
        <position position="769"/>
    </location>
</feature>
<organism>
    <name type="scientific">Candida albicans (strain SC5314 / ATCC MYA-2876)</name>
    <name type="common">Yeast</name>
    <dbReference type="NCBI Taxonomy" id="237561"/>
    <lineage>
        <taxon>Eukaryota</taxon>
        <taxon>Fungi</taxon>
        <taxon>Dikarya</taxon>
        <taxon>Ascomycota</taxon>
        <taxon>Saccharomycotina</taxon>
        <taxon>Pichiomycetes</taxon>
        <taxon>Debaryomycetaceae</taxon>
        <taxon>Candida/Lodderomyces clade</taxon>
        <taxon>Candida</taxon>
    </lineage>
</organism>
<name>CAS5_CANAL</name>